<name>YEFM_MYCBO</name>
<evidence type="ECO:0000250" key="1"/>
<evidence type="ECO:0000305" key="2"/>
<accession>P65068</accession>
<accession>A0A1R3Y3Z1</accession>
<accession>O50386</accession>
<accession>X2BN90</accession>
<organism>
    <name type="scientific">Mycobacterium bovis (strain ATCC BAA-935 / AF2122/97)</name>
    <dbReference type="NCBI Taxonomy" id="233413"/>
    <lineage>
        <taxon>Bacteria</taxon>
        <taxon>Bacillati</taxon>
        <taxon>Actinomycetota</taxon>
        <taxon>Actinomycetes</taxon>
        <taxon>Mycobacteriales</taxon>
        <taxon>Mycobacteriaceae</taxon>
        <taxon>Mycobacterium</taxon>
        <taxon>Mycobacterium tuberculosis complex</taxon>
    </lineage>
</organism>
<proteinExistence type="inferred from homology"/>
<comment type="function">
    <text evidence="1">Antitoxin component of a type II toxin-antitoxin (TA) system. A probable antitoxin for the putative mRNA interferase YeoB (By similarity).</text>
</comment>
<comment type="subunit">
    <text evidence="1">Homodimer. May form YefM(2)-YoeB toxin-antitoxin complexes which inhibits the toxins activity (By similarity).</text>
</comment>
<comment type="similarity">
    <text evidence="2">Belongs to the phD/YefM antitoxin family.</text>
</comment>
<gene>
    <name type="primary">yefM</name>
    <name type="ordered locus">BQ2027_MB3392</name>
</gene>
<reference key="1">
    <citation type="journal article" date="2003" name="Proc. Natl. Acad. Sci. U.S.A.">
        <title>The complete genome sequence of Mycobacterium bovis.</title>
        <authorList>
            <person name="Garnier T."/>
            <person name="Eiglmeier K."/>
            <person name="Camus J.-C."/>
            <person name="Medina N."/>
            <person name="Mansoor H."/>
            <person name="Pryor M."/>
            <person name="Duthoy S."/>
            <person name="Grondin S."/>
            <person name="Lacroix C."/>
            <person name="Monsempe C."/>
            <person name="Simon S."/>
            <person name="Harris B."/>
            <person name="Atkin R."/>
            <person name="Doggett J."/>
            <person name="Mayes R."/>
            <person name="Keating L."/>
            <person name="Wheeler P.R."/>
            <person name="Parkhill J."/>
            <person name="Barrell B.G."/>
            <person name="Cole S.T."/>
            <person name="Gordon S.V."/>
            <person name="Hewinson R.G."/>
        </authorList>
    </citation>
    <scope>NUCLEOTIDE SEQUENCE [LARGE SCALE GENOMIC DNA]</scope>
    <source>
        <strain>ATCC BAA-935 / AF2122/97</strain>
    </source>
</reference>
<reference key="2">
    <citation type="journal article" date="2017" name="Genome Announc.">
        <title>Updated reference genome sequence and annotation of Mycobacterium bovis AF2122/97.</title>
        <authorList>
            <person name="Malone K.M."/>
            <person name="Farrell D."/>
            <person name="Stuber T.P."/>
            <person name="Schubert O.T."/>
            <person name="Aebersold R."/>
            <person name="Robbe-Austerman S."/>
            <person name="Gordon S.V."/>
        </authorList>
    </citation>
    <scope>NUCLEOTIDE SEQUENCE [LARGE SCALE GENOMIC DNA]</scope>
    <scope>GENOME REANNOTATION</scope>
    <source>
        <strain>ATCC BAA-935 / AF2122/97</strain>
    </source>
</reference>
<dbReference type="EMBL" id="LT708304">
    <property type="protein sequence ID" value="SIU02021.1"/>
    <property type="molecule type" value="Genomic_DNA"/>
</dbReference>
<dbReference type="RefSeq" id="NP_857033.1">
    <property type="nucleotide sequence ID" value="NC_002945.3"/>
</dbReference>
<dbReference type="SMR" id="P65068"/>
<dbReference type="KEGG" id="mbo:BQ2027_MB3392"/>
<dbReference type="PATRIC" id="fig|233413.5.peg.3727"/>
<dbReference type="Proteomes" id="UP000001419">
    <property type="component" value="Chromosome"/>
</dbReference>
<dbReference type="FunFam" id="3.40.1620.10:FF:000005">
    <property type="entry name" value="Antitoxin RelJ"/>
    <property type="match status" value="1"/>
</dbReference>
<dbReference type="Gene3D" id="1.10.1220.170">
    <property type="match status" value="1"/>
</dbReference>
<dbReference type="Gene3D" id="3.40.1620.10">
    <property type="entry name" value="YefM-like domain"/>
    <property type="match status" value="1"/>
</dbReference>
<dbReference type="InterPro" id="IPR006442">
    <property type="entry name" value="Antitoxin_Phd/YefM"/>
</dbReference>
<dbReference type="InterPro" id="IPR051405">
    <property type="entry name" value="phD/YefM_antitoxin"/>
</dbReference>
<dbReference type="InterPro" id="IPR036165">
    <property type="entry name" value="YefM-like_sf"/>
</dbReference>
<dbReference type="NCBIfam" id="TIGR01552">
    <property type="entry name" value="phd_fam"/>
    <property type="match status" value="1"/>
</dbReference>
<dbReference type="PANTHER" id="PTHR33713">
    <property type="entry name" value="ANTITOXIN YAFN-RELATED"/>
    <property type="match status" value="1"/>
</dbReference>
<dbReference type="PANTHER" id="PTHR33713:SF6">
    <property type="entry name" value="ANTITOXIN YEFM"/>
    <property type="match status" value="1"/>
</dbReference>
<dbReference type="Pfam" id="PF02604">
    <property type="entry name" value="PhdYeFM_antitox"/>
    <property type="match status" value="1"/>
</dbReference>
<dbReference type="SUPFAM" id="SSF143120">
    <property type="entry name" value="YefM-like"/>
    <property type="match status" value="1"/>
</dbReference>
<keyword id="KW-1185">Reference proteome</keyword>
<keyword id="KW-1277">Toxin-antitoxin system</keyword>
<protein>
    <recommendedName>
        <fullName>Antitoxin YefM</fullName>
    </recommendedName>
</protein>
<sequence length="91" mass="10194">MSISASEARQRLFPLIEQVNTDHQPVRITSRAGDAVLMSADDYDAWQETVYLLRSPENARRLMEAVARDKAGHSAFTKSVDELREMAGGEE</sequence>
<feature type="chain" id="PRO_0000213741" description="Antitoxin YefM">
    <location>
        <begin position="1"/>
        <end position="91"/>
    </location>
</feature>